<sequence>MKLTCMMIVAVLFLTAWTFATADDSSNGLENLFSKAHHEMKNPEASKLNKRCIEQFDPCDMIRHTCCVGVCFLMACI</sequence>
<evidence type="ECO:0000250" key="1">
    <source>
        <dbReference type="UniProtKB" id="Q26443"/>
    </source>
</evidence>
<evidence type="ECO:0000255" key="2"/>
<evidence type="ECO:0000269" key="3">
    <source>
    </source>
</evidence>
<evidence type="ECO:0000305" key="4"/>
<evidence type="ECO:0000305" key="5">
    <source>
    </source>
</evidence>
<evidence type="ECO:0000312" key="6">
    <source>
        <dbReference type="EMBL" id="AAF07978.1"/>
    </source>
</evidence>
<evidence type="ECO:0000312" key="7">
    <source>
        <dbReference type="EMBL" id="CAA37378.1"/>
    </source>
</evidence>
<protein>
    <recommendedName>
        <fullName evidence="4">Conotoxin King-Kong 1</fullName>
        <shortName evidence="7">KK-1</shortName>
    </recommendedName>
    <alternativeName>
        <fullName evidence="6">TxMKLT1-015</fullName>
    </alternativeName>
</protein>
<comment type="subcellular location">
    <subcellularLocation>
        <location evidence="5">Secreted</location>
    </subcellularLocation>
</comment>
<comment type="tissue specificity">
    <text evidence="5">Expressed by the venom duct.</text>
</comment>
<comment type="domain">
    <text evidence="1">The presence of a 'disulfide through disulfide knot' structurally defines this protein as a knottin.</text>
</comment>
<comment type="domain">
    <text evidence="4">The cysteine framework is VI/VII (C-C-CC-C-C).</text>
</comment>
<comment type="similarity">
    <text evidence="4">Belongs to the conotoxin O1 superfamily.</text>
</comment>
<reference key="1">
    <citation type="journal article" date="1990" name="EMBO J.">
        <title>Constant and hypervariable regions in conotoxin propeptides.</title>
        <authorList>
            <person name="Woodward S.R."/>
            <person name="Cruz L.J."/>
            <person name="Olivera B.M."/>
            <person name="Hillyard D.R."/>
        </authorList>
    </citation>
    <scope>NUCLEOTIDE SEQUENCE [MRNA]</scope>
</reference>
<reference key="2">
    <citation type="journal article" date="2001" name="Mol. Biol. Evol.">
        <title>Mechanisms for evolving hypervariability: the case of conopeptides.</title>
        <authorList>
            <person name="Conticello S.G."/>
            <person name="Gilad Y."/>
            <person name="Avidan N."/>
            <person name="Ben-Asher E."/>
            <person name="Levy Z."/>
            <person name="Fainzilber M."/>
        </authorList>
    </citation>
    <scope>NUCLEOTIDE SEQUENCE [MRNA]</scope>
</reference>
<reference key="3">
    <citation type="journal article" date="2012" name="J. Proteome Res.">
        <title>Constrained de novo sequencing of conotoxins.</title>
        <authorList>
            <person name="Bhatia S."/>
            <person name="Kil Y.J."/>
            <person name="Ueberheide B."/>
            <person name="Chait B.T."/>
            <person name="Tayo L."/>
            <person name="Cruz L."/>
            <person name="Lu B."/>
            <person name="Yates J.R. III"/>
            <person name="Bern M."/>
        </authorList>
    </citation>
    <scope>IDENTIFICATION BY MASS SPECTROMETRY</scope>
    <scope>SUBCELLULAR LOCATION</scope>
    <scope>OXIDATION AT MET-61</scope>
    <source>
        <tissue>Venom</tissue>
    </source>
</reference>
<proteinExistence type="evidence at protein level"/>
<dbReference type="EMBL" id="X53284">
    <property type="protein sequence ID" value="CAA37378.1"/>
    <property type="molecule type" value="mRNA"/>
</dbReference>
<dbReference type="EMBL" id="AF193267">
    <property type="protein sequence ID" value="AAF07978.1"/>
    <property type="molecule type" value="mRNA"/>
</dbReference>
<dbReference type="PIR" id="S12514">
    <property type="entry name" value="S12514"/>
</dbReference>
<dbReference type="ConoServer" id="599">
    <property type="toxin name" value="King-Kong 1 precursor"/>
</dbReference>
<dbReference type="ConoServer" id="1100">
    <property type="toxin name" value="TxMKLT1-015 precursor"/>
</dbReference>
<dbReference type="GO" id="GO:0005576">
    <property type="term" value="C:extracellular region"/>
    <property type="evidence" value="ECO:0007669"/>
    <property type="project" value="UniProtKB-SubCell"/>
</dbReference>
<dbReference type="GO" id="GO:0008200">
    <property type="term" value="F:ion channel inhibitor activity"/>
    <property type="evidence" value="ECO:0007669"/>
    <property type="project" value="InterPro"/>
</dbReference>
<dbReference type="GO" id="GO:0090729">
    <property type="term" value="F:toxin activity"/>
    <property type="evidence" value="ECO:0007669"/>
    <property type="project" value="UniProtKB-KW"/>
</dbReference>
<dbReference type="InterPro" id="IPR004214">
    <property type="entry name" value="Conotoxin"/>
</dbReference>
<dbReference type="Pfam" id="PF02950">
    <property type="entry name" value="Conotoxin"/>
    <property type="match status" value="1"/>
</dbReference>
<keyword id="KW-0165">Cleavage on pair of basic residues</keyword>
<keyword id="KW-1015">Disulfide bond</keyword>
<keyword id="KW-0960">Knottin</keyword>
<keyword id="KW-0528">Neurotoxin</keyword>
<keyword id="KW-0558">Oxidation</keyword>
<keyword id="KW-0964">Secreted</keyword>
<keyword id="KW-0732">Signal</keyword>
<keyword id="KW-0800">Toxin</keyword>
<name>O16K1_CONTE</name>
<accession>P18512</accession>
<accession>Q9U649</accession>
<feature type="signal peptide" evidence="2">
    <location>
        <begin position="1"/>
        <end position="22"/>
    </location>
</feature>
<feature type="propeptide" id="PRO_0000034985" evidence="4">
    <location>
        <begin position="23"/>
        <end position="49"/>
    </location>
</feature>
<feature type="peptide" id="PRO_0000034986" description="Conotoxin King-Kong 1" evidence="3">
    <location>
        <begin position="52"/>
        <end position="77"/>
    </location>
</feature>
<feature type="modified residue" description="Methionine sulfoxide; partial" evidence="3">
    <location>
        <position position="61"/>
    </location>
</feature>
<feature type="disulfide bond" evidence="1">
    <location>
        <begin position="52"/>
        <end position="67"/>
    </location>
</feature>
<feature type="disulfide bond" evidence="1">
    <location>
        <begin position="59"/>
        <end position="71"/>
    </location>
</feature>
<feature type="disulfide bond" evidence="1">
    <location>
        <begin position="66"/>
        <end position="76"/>
    </location>
</feature>
<feature type="sequence conflict" description="In Ref. 1; CAA37378." evidence="4" ref="1">
    <original>D</original>
    <variation>E</variation>
    <location>
        <position position="60"/>
    </location>
</feature>
<organism>
    <name type="scientific">Conus textile</name>
    <name type="common">Cloth-of-gold cone</name>
    <dbReference type="NCBI Taxonomy" id="6494"/>
    <lineage>
        <taxon>Eukaryota</taxon>
        <taxon>Metazoa</taxon>
        <taxon>Spiralia</taxon>
        <taxon>Lophotrochozoa</taxon>
        <taxon>Mollusca</taxon>
        <taxon>Gastropoda</taxon>
        <taxon>Caenogastropoda</taxon>
        <taxon>Neogastropoda</taxon>
        <taxon>Conoidea</taxon>
        <taxon>Conidae</taxon>
        <taxon>Conus</taxon>
        <taxon>Cylinder</taxon>
    </lineage>
</organism>